<proteinExistence type="inferred from homology"/>
<sequence length="589" mass="65263">MTKTKGKVVGINGNMISVSFEGLVTLNEVGYVEVGSKKLKSEVIRIRGEVAQLQVFEITKGIKVGDIVEFTGDLLSVELGPGLLGQVYDGLQNPLPELAEQAGYFLERGIYLNALSRTAKWHFTPSAKEGDTLKRADLLGTVPEGSFTHRIMIPFNMYGTYKLKSIKPEGDYTVDDTIAEVTDERGNVIPLTMSFKWPVKRAIDCYAERLKPTETLVTKMRTMDTFFPVAKGGTYCIPGPFGAGKTVLQHATSRNADVDIVIIAACGERAGEVVETLTEFPELKDPKTGRTLMERTIIICNTSSMPVAAREASVYTGVTLAEYYRQMGLDVLLLADSTSRWAQALREMSGRLEEIPGEEAFPAYLESYIAAFYERAGIVRLSDGSKGSVTIGGTVSPAGGNFEEPVTQATLKVVGAFHGLSRERSDARKYPAIHPLDSWSKYPSVLPLEQVKYGRSFLRRGTEVEQMMKVVGEEGTSIEDFIIYLKGDLLDAVYLQQNSFDKVDDAVSVERQQHIYNILIEILGTSFKFVSKDEARSYFSKLKLMFIDYNYSPWGSDAFKSHEDGIKKHIAEKADSLDERAKKLLKQAV</sequence>
<keyword id="KW-0066">ATP synthesis</keyword>
<keyword id="KW-0067">ATP-binding</keyword>
<keyword id="KW-0375">Hydrogen ion transport</keyword>
<keyword id="KW-0406">Ion transport</keyword>
<keyword id="KW-0547">Nucleotide-binding</keyword>
<keyword id="KW-1185">Reference proteome</keyword>
<keyword id="KW-1278">Translocase</keyword>
<keyword id="KW-0813">Transport</keyword>
<comment type="function">
    <text evidence="1">Produces ATP from ADP in the presence of a proton gradient across the membrane. The V-type alpha chain is a catalytic subunit.</text>
</comment>
<comment type="catalytic activity">
    <reaction evidence="1">
        <text>ATP + H2O + 4 H(+)(in) = ADP + phosphate + 5 H(+)(out)</text>
        <dbReference type="Rhea" id="RHEA:57720"/>
        <dbReference type="ChEBI" id="CHEBI:15377"/>
        <dbReference type="ChEBI" id="CHEBI:15378"/>
        <dbReference type="ChEBI" id="CHEBI:30616"/>
        <dbReference type="ChEBI" id="CHEBI:43474"/>
        <dbReference type="ChEBI" id="CHEBI:456216"/>
        <dbReference type="EC" id="7.1.2.2"/>
    </reaction>
</comment>
<comment type="similarity">
    <text evidence="1">Belongs to the ATPase alpha/beta chains family.</text>
</comment>
<dbReference type="EC" id="7.1.2.2" evidence="1"/>
<dbReference type="EMBL" id="AE017226">
    <property type="protein sequence ID" value="AAS12198.1"/>
    <property type="molecule type" value="Genomic_DNA"/>
</dbReference>
<dbReference type="RefSeq" id="NP_972287.1">
    <property type="nucleotide sequence ID" value="NC_002967.9"/>
</dbReference>
<dbReference type="RefSeq" id="WP_002669362.1">
    <property type="nucleotide sequence ID" value="NC_002967.9"/>
</dbReference>
<dbReference type="SMR" id="Q73M28"/>
<dbReference type="STRING" id="243275.TDE_1683"/>
<dbReference type="PaxDb" id="243275-TDE_1683"/>
<dbReference type="GeneID" id="2740138"/>
<dbReference type="KEGG" id="tde:TDE_1683"/>
<dbReference type="PATRIC" id="fig|243275.7.peg.1610"/>
<dbReference type="eggNOG" id="COG1155">
    <property type="taxonomic scope" value="Bacteria"/>
</dbReference>
<dbReference type="HOGENOM" id="CLU_008162_1_1_12"/>
<dbReference type="OrthoDB" id="9803053at2"/>
<dbReference type="Proteomes" id="UP000008212">
    <property type="component" value="Chromosome"/>
</dbReference>
<dbReference type="GO" id="GO:0005524">
    <property type="term" value="F:ATP binding"/>
    <property type="evidence" value="ECO:0007669"/>
    <property type="project" value="UniProtKB-UniRule"/>
</dbReference>
<dbReference type="GO" id="GO:0046933">
    <property type="term" value="F:proton-transporting ATP synthase activity, rotational mechanism"/>
    <property type="evidence" value="ECO:0007669"/>
    <property type="project" value="UniProtKB-UniRule"/>
</dbReference>
<dbReference type="GO" id="GO:0046961">
    <property type="term" value="F:proton-transporting ATPase activity, rotational mechanism"/>
    <property type="evidence" value="ECO:0007669"/>
    <property type="project" value="InterPro"/>
</dbReference>
<dbReference type="GO" id="GO:0042777">
    <property type="term" value="P:proton motive force-driven plasma membrane ATP synthesis"/>
    <property type="evidence" value="ECO:0007669"/>
    <property type="project" value="UniProtKB-UniRule"/>
</dbReference>
<dbReference type="CDD" id="cd01426">
    <property type="entry name" value="ATP-synt_F1_V1_A1_AB_FliI_N"/>
    <property type="match status" value="1"/>
</dbReference>
<dbReference type="CDD" id="cd01134">
    <property type="entry name" value="V_A-ATPase_A"/>
    <property type="match status" value="1"/>
</dbReference>
<dbReference type="Gene3D" id="2.40.30.20">
    <property type="match status" value="1"/>
</dbReference>
<dbReference type="Gene3D" id="2.40.50.100">
    <property type="match status" value="1"/>
</dbReference>
<dbReference type="Gene3D" id="1.10.1140.10">
    <property type="entry name" value="Bovine Mitochondrial F1-atpase, Atp Synthase Beta Chain, Chain D, domain 3"/>
    <property type="match status" value="1"/>
</dbReference>
<dbReference type="Gene3D" id="3.40.50.300">
    <property type="entry name" value="P-loop containing nucleotide triphosphate hydrolases"/>
    <property type="match status" value="1"/>
</dbReference>
<dbReference type="HAMAP" id="MF_00309">
    <property type="entry name" value="ATP_synth_A_arch"/>
    <property type="match status" value="1"/>
</dbReference>
<dbReference type="InterPro" id="IPR055190">
    <property type="entry name" value="ATP-synt_VA_C"/>
</dbReference>
<dbReference type="InterPro" id="IPR031686">
    <property type="entry name" value="ATP-synth_a_Xtn"/>
</dbReference>
<dbReference type="InterPro" id="IPR023366">
    <property type="entry name" value="ATP_synth_asu-like_sf"/>
</dbReference>
<dbReference type="InterPro" id="IPR020003">
    <property type="entry name" value="ATPase_a/bsu_AS"/>
</dbReference>
<dbReference type="InterPro" id="IPR004100">
    <property type="entry name" value="ATPase_F1/V1/A1_a/bsu_N"/>
</dbReference>
<dbReference type="InterPro" id="IPR000194">
    <property type="entry name" value="ATPase_F1/V1/A1_a/bsu_nucl-bd"/>
</dbReference>
<dbReference type="InterPro" id="IPR024034">
    <property type="entry name" value="ATPase_F1/V1_b/a_C"/>
</dbReference>
<dbReference type="InterPro" id="IPR027417">
    <property type="entry name" value="P-loop_NTPase"/>
</dbReference>
<dbReference type="InterPro" id="IPR022878">
    <property type="entry name" value="V-ATPase_asu"/>
</dbReference>
<dbReference type="NCBIfam" id="NF003220">
    <property type="entry name" value="PRK04192.1"/>
    <property type="match status" value="1"/>
</dbReference>
<dbReference type="PANTHER" id="PTHR43607:SF1">
    <property type="entry name" value="H(+)-TRANSPORTING TWO-SECTOR ATPASE"/>
    <property type="match status" value="1"/>
</dbReference>
<dbReference type="PANTHER" id="PTHR43607">
    <property type="entry name" value="V-TYPE PROTON ATPASE CATALYTIC SUBUNIT A"/>
    <property type="match status" value="1"/>
</dbReference>
<dbReference type="Pfam" id="PF00006">
    <property type="entry name" value="ATP-synt_ab"/>
    <property type="match status" value="1"/>
</dbReference>
<dbReference type="Pfam" id="PF02874">
    <property type="entry name" value="ATP-synt_ab_N"/>
    <property type="match status" value="1"/>
</dbReference>
<dbReference type="Pfam" id="PF16886">
    <property type="entry name" value="ATP-synt_ab_Xtn"/>
    <property type="match status" value="1"/>
</dbReference>
<dbReference type="Pfam" id="PF22919">
    <property type="entry name" value="ATP-synt_VA_C"/>
    <property type="match status" value="1"/>
</dbReference>
<dbReference type="SUPFAM" id="SSF52540">
    <property type="entry name" value="P-loop containing nucleoside triphosphate hydrolases"/>
    <property type="match status" value="1"/>
</dbReference>
<dbReference type="PROSITE" id="PS00152">
    <property type="entry name" value="ATPASE_ALPHA_BETA"/>
    <property type="match status" value="1"/>
</dbReference>
<gene>
    <name evidence="1" type="primary">atpA</name>
    <name type="ordered locus">TDE_1683</name>
</gene>
<feature type="chain" id="PRO_1000059361" description="V-type ATP synthase alpha chain">
    <location>
        <begin position="1"/>
        <end position="589"/>
    </location>
</feature>
<feature type="binding site" evidence="1">
    <location>
        <begin position="239"/>
        <end position="246"/>
    </location>
    <ligand>
        <name>ATP</name>
        <dbReference type="ChEBI" id="CHEBI:30616"/>
    </ligand>
</feature>
<organism>
    <name type="scientific">Treponema denticola (strain ATCC 35405 / DSM 14222 / CIP 103919 / JCM 8153 / KCTC 15104)</name>
    <dbReference type="NCBI Taxonomy" id="243275"/>
    <lineage>
        <taxon>Bacteria</taxon>
        <taxon>Pseudomonadati</taxon>
        <taxon>Spirochaetota</taxon>
        <taxon>Spirochaetia</taxon>
        <taxon>Spirochaetales</taxon>
        <taxon>Treponemataceae</taxon>
        <taxon>Treponema</taxon>
    </lineage>
</organism>
<name>VATA_TREDE</name>
<accession>Q73M28</accession>
<reference key="1">
    <citation type="journal article" date="2004" name="Proc. Natl. Acad. Sci. U.S.A.">
        <title>Comparison of the genome of the oral pathogen Treponema denticola with other spirochete genomes.</title>
        <authorList>
            <person name="Seshadri R."/>
            <person name="Myers G.S.A."/>
            <person name="Tettelin H."/>
            <person name="Eisen J.A."/>
            <person name="Heidelberg J.F."/>
            <person name="Dodson R.J."/>
            <person name="Davidsen T.M."/>
            <person name="DeBoy R.T."/>
            <person name="Fouts D.E."/>
            <person name="Haft D.H."/>
            <person name="Selengut J."/>
            <person name="Ren Q."/>
            <person name="Brinkac L.M."/>
            <person name="Madupu R."/>
            <person name="Kolonay J.F."/>
            <person name="Durkin S.A."/>
            <person name="Daugherty S.C."/>
            <person name="Shetty J."/>
            <person name="Shvartsbeyn A."/>
            <person name="Gebregeorgis E."/>
            <person name="Geer K."/>
            <person name="Tsegaye G."/>
            <person name="Malek J.A."/>
            <person name="Ayodeji B."/>
            <person name="Shatsman S."/>
            <person name="McLeod M.P."/>
            <person name="Smajs D."/>
            <person name="Howell J.K."/>
            <person name="Pal S."/>
            <person name="Amin A."/>
            <person name="Vashisth P."/>
            <person name="McNeill T.Z."/>
            <person name="Xiang Q."/>
            <person name="Sodergren E."/>
            <person name="Baca E."/>
            <person name="Weinstock G.M."/>
            <person name="Norris S.J."/>
            <person name="Fraser C.M."/>
            <person name="Paulsen I.T."/>
        </authorList>
    </citation>
    <scope>NUCLEOTIDE SEQUENCE [LARGE SCALE GENOMIC DNA]</scope>
    <source>
        <strain>ATCC 35405 / DSM 14222 / CIP 103919 / JCM 8153 / KCTC 15104</strain>
    </source>
</reference>
<evidence type="ECO:0000255" key="1">
    <source>
        <dbReference type="HAMAP-Rule" id="MF_00309"/>
    </source>
</evidence>
<protein>
    <recommendedName>
        <fullName evidence="1">V-type ATP synthase alpha chain</fullName>
        <ecNumber evidence="1">7.1.2.2</ecNumber>
    </recommendedName>
    <alternativeName>
        <fullName evidence="1">V-ATPase subunit A</fullName>
    </alternativeName>
</protein>